<reference key="1">
    <citation type="journal article" date="2002" name="Proc. Natl. Acad. Sci. U.S.A.">
        <title>Genome sequence of Streptococcus mutans UA159, a cariogenic dental pathogen.</title>
        <authorList>
            <person name="Ajdic D.J."/>
            <person name="McShan W.M."/>
            <person name="McLaughlin R.E."/>
            <person name="Savic G."/>
            <person name="Chang J."/>
            <person name="Carson M.B."/>
            <person name="Primeaux C."/>
            <person name="Tian R."/>
            <person name="Kenton S."/>
            <person name="Jia H.G."/>
            <person name="Lin S.P."/>
            <person name="Qian Y."/>
            <person name="Li S."/>
            <person name="Zhu H."/>
            <person name="Najar F.Z."/>
            <person name="Lai H."/>
            <person name="White J."/>
            <person name="Roe B.A."/>
            <person name="Ferretti J.J."/>
        </authorList>
    </citation>
    <scope>NUCLEOTIDE SEQUENCE [LARGE SCALE GENOMIC DNA]</scope>
    <source>
        <strain>ATCC 700610 / UA159</strain>
    </source>
</reference>
<protein>
    <recommendedName>
        <fullName evidence="1">Segregation and condensation protein A</fullName>
    </recommendedName>
</protein>
<feature type="chain" id="PRO_0000211113" description="Segregation and condensation protein A">
    <location>
        <begin position="1"/>
        <end position="235"/>
    </location>
</feature>
<accession>Q7ZAK8</accession>
<comment type="function">
    <text evidence="1">Participates in chromosomal partition during cell division. May act via the formation of a condensin-like complex containing Smc and ScpB that pull DNA away from mid-cell into both cell halves.</text>
</comment>
<comment type="subunit">
    <text evidence="1">Component of a cohesin-like complex composed of ScpA, ScpB and the Smc homodimer, in which ScpA and ScpB bind to the head domain of Smc. The presence of the three proteins is required for the association of the complex with DNA.</text>
</comment>
<comment type="subcellular location">
    <subcellularLocation>
        <location evidence="1">Cytoplasm</location>
    </subcellularLocation>
    <text evidence="1">Associated with two foci at the outer edges of the nucleoid region in young cells, and at four foci within both cell halves in older cells.</text>
</comment>
<comment type="similarity">
    <text evidence="1">Belongs to the ScpA family.</text>
</comment>
<evidence type="ECO:0000255" key="1">
    <source>
        <dbReference type="HAMAP-Rule" id="MF_01805"/>
    </source>
</evidence>
<dbReference type="EMBL" id="AE014133">
    <property type="protein sequence ID" value="AAN59348.1"/>
    <property type="molecule type" value="Genomic_DNA"/>
</dbReference>
<dbReference type="RefSeq" id="NP_722042.1">
    <property type="nucleotide sequence ID" value="NC_004350.2"/>
</dbReference>
<dbReference type="RefSeq" id="WP_002262561.1">
    <property type="nucleotide sequence ID" value="NC_004350.2"/>
</dbReference>
<dbReference type="SMR" id="Q7ZAK8"/>
<dbReference type="STRING" id="210007.SMU_1713c"/>
<dbReference type="KEGG" id="smu:SMU_1713c"/>
<dbReference type="PATRIC" id="fig|210007.7.peg.1531"/>
<dbReference type="eggNOG" id="COG1354">
    <property type="taxonomic scope" value="Bacteria"/>
</dbReference>
<dbReference type="HOGENOM" id="CLU_038686_3_3_9"/>
<dbReference type="OrthoDB" id="9811016at2"/>
<dbReference type="PhylomeDB" id="Q7ZAK8"/>
<dbReference type="Proteomes" id="UP000002512">
    <property type="component" value="Chromosome"/>
</dbReference>
<dbReference type="GO" id="GO:0005737">
    <property type="term" value="C:cytoplasm"/>
    <property type="evidence" value="ECO:0007669"/>
    <property type="project" value="UniProtKB-SubCell"/>
</dbReference>
<dbReference type="GO" id="GO:0051301">
    <property type="term" value="P:cell division"/>
    <property type="evidence" value="ECO:0007669"/>
    <property type="project" value="UniProtKB-KW"/>
</dbReference>
<dbReference type="GO" id="GO:0007059">
    <property type="term" value="P:chromosome segregation"/>
    <property type="evidence" value="ECO:0007669"/>
    <property type="project" value="UniProtKB-UniRule"/>
</dbReference>
<dbReference type="GO" id="GO:0006260">
    <property type="term" value="P:DNA replication"/>
    <property type="evidence" value="ECO:0007669"/>
    <property type="project" value="UniProtKB-UniRule"/>
</dbReference>
<dbReference type="Gene3D" id="6.10.250.2410">
    <property type="match status" value="1"/>
</dbReference>
<dbReference type="HAMAP" id="MF_01805">
    <property type="entry name" value="ScpA"/>
    <property type="match status" value="1"/>
</dbReference>
<dbReference type="InterPro" id="IPR003768">
    <property type="entry name" value="ScpA"/>
</dbReference>
<dbReference type="NCBIfam" id="NF000993">
    <property type="entry name" value="PRK00104.1-2"/>
    <property type="match status" value="1"/>
</dbReference>
<dbReference type="PANTHER" id="PTHR33969">
    <property type="entry name" value="SEGREGATION AND CONDENSATION PROTEIN A"/>
    <property type="match status" value="1"/>
</dbReference>
<dbReference type="PANTHER" id="PTHR33969:SF2">
    <property type="entry name" value="SEGREGATION AND CONDENSATION PROTEIN A"/>
    <property type="match status" value="1"/>
</dbReference>
<dbReference type="Pfam" id="PF02616">
    <property type="entry name" value="SMC_ScpA"/>
    <property type="match status" value="1"/>
</dbReference>
<sequence length="235" mass="27561">MDIKLKDFEGPLDLLLHLVSKYEVDIYDVPIVDIIEQYLAYIATLQAMKLEVAGEYMVMASQLMLIKSRKLLPKVVETIEAEEDPELQLLHQIEEYRTYKLLGEELALKHNERAQRFSKPKLELIYDDITLKQDKTVLDVFLAFSKVMAEKQEEIKNSHTTIKSDDYRIEDIMTVVEEQVIRQKETNLSWFFKRAGSLNEIITIFLAALELIKVHRVYVKQEHNFDDIILRKESA</sequence>
<organism>
    <name type="scientific">Streptococcus mutans serotype c (strain ATCC 700610 / UA159)</name>
    <dbReference type="NCBI Taxonomy" id="210007"/>
    <lineage>
        <taxon>Bacteria</taxon>
        <taxon>Bacillati</taxon>
        <taxon>Bacillota</taxon>
        <taxon>Bacilli</taxon>
        <taxon>Lactobacillales</taxon>
        <taxon>Streptococcaceae</taxon>
        <taxon>Streptococcus</taxon>
    </lineage>
</organism>
<gene>
    <name evidence="1" type="primary">scpA</name>
    <name type="ordered locus">SMU_1713c</name>
</gene>
<keyword id="KW-0131">Cell cycle</keyword>
<keyword id="KW-0132">Cell division</keyword>
<keyword id="KW-0159">Chromosome partition</keyword>
<keyword id="KW-0963">Cytoplasm</keyword>
<keyword id="KW-1185">Reference proteome</keyword>
<name>SCPA_STRMU</name>
<proteinExistence type="inferred from homology"/>